<keyword id="KW-0046">Antibiotic resistance</keyword>
<keyword id="KW-0121">Carboxypeptidase</keyword>
<keyword id="KW-0997">Cell inner membrane</keyword>
<keyword id="KW-1003">Cell membrane</keyword>
<keyword id="KW-0133">Cell shape</keyword>
<keyword id="KW-0961">Cell wall biogenesis/degradation</keyword>
<keyword id="KW-0328">Glycosyltransferase</keyword>
<keyword id="KW-0378">Hydrolase</keyword>
<keyword id="KW-0472">Membrane</keyword>
<keyword id="KW-0511">Multifunctional enzyme</keyword>
<keyword id="KW-0573">Peptidoglycan synthesis</keyword>
<keyword id="KW-0645">Protease</keyword>
<keyword id="KW-1185">Reference proteome</keyword>
<keyword id="KW-0735">Signal-anchor</keyword>
<keyword id="KW-0808">Transferase</keyword>
<keyword id="KW-0812">Transmembrane</keyword>
<keyword id="KW-1133">Transmembrane helix</keyword>
<feature type="initiator methionine" description="Removed" evidence="1">
    <location>
        <position position="1"/>
    </location>
</feature>
<feature type="chain" id="PRO_0000083168" description="Penicillin-binding protein 1A">
    <location>
        <begin position="2"/>
        <end position="798"/>
    </location>
</feature>
<feature type="topological domain" description="Cytoplasmic" evidence="4">
    <location>
        <begin position="2"/>
        <end position="9"/>
    </location>
</feature>
<feature type="transmembrane region" description="Helical; Signal-anchor for type II membrane protein" evidence="4">
    <location>
        <begin position="10"/>
        <end position="30"/>
    </location>
</feature>
<feature type="topological domain" description="Periplasmic" evidence="4">
    <location>
        <begin position="31"/>
        <end position="798"/>
    </location>
</feature>
<feature type="region of interest" description="Transglycosylase">
    <location>
        <begin position="50"/>
        <end position="218"/>
    </location>
</feature>
<feature type="region of interest" description="Transpeptidase">
    <location>
        <begin position="378"/>
        <end position="700"/>
    </location>
</feature>
<feature type="region of interest" description="Disordered" evidence="5">
    <location>
        <begin position="739"/>
        <end position="798"/>
    </location>
</feature>
<feature type="compositionally biased region" description="Basic and acidic residues" evidence="5">
    <location>
        <begin position="766"/>
        <end position="777"/>
    </location>
</feature>
<feature type="compositionally biased region" description="Polar residues" evidence="5">
    <location>
        <begin position="783"/>
        <end position="798"/>
    </location>
</feature>
<feature type="active site" description="Proton donor; for transglycosylase activity" evidence="3">
    <location>
        <position position="88"/>
    </location>
</feature>
<feature type="active site" description="Acyl-ester intermediate; for transpeptidase activity" evidence="3">
    <location>
        <position position="461"/>
    </location>
</feature>
<comment type="function">
    <text evidence="1">Cell wall formation. Synthesis of cross-linked peptidoglycan from the lipid intermediates. The enzyme has a penicillin-insensitive transglycosylase N-terminal domain (formation of linear glycan strands) and a penicillin-sensitive transpeptidase C-terminal domain (cross-linking of the peptide subunits). Essential for cell wall synthesis.</text>
</comment>
<comment type="catalytic activity">
    <reaction evidence="2">
        <text>[GlcNAc-(1-&gt;4)-Mur2Ac(oyl-L-Ala-gamma-D-Glu-L-Lys-D-Ala-D-Ala)](n)-di-trans,octa-cis-undecaprenyl diphosphate + beta-D-GlcNAc-(1-&gt;4)-Mur2Ac(oyl-L-Ala-gamma-D-Glu-L-Lys-D-Ala-D-Ala)-di-trans,octa-cis-undecaprenyl diphosphate = [GlcNAc-(1-&gt;4)-Mur2Ac(oyl-L-Ala-gamma-D-Glu-L-Lys-D-Ala-D-Ala)](n+1)-di-trans,octa-cis-undecaprenyl diphosphate + di-trans,octa-cis-undecaprenyl diphosphate + H(+)</text>
        <dbReference type="Rhea" id="RHEA:23708"/>
        <dbReference type="Rhea" id="RHEA-COMP:9602"/>
        <dbReference type="Rhea" id="RHEA-COMP:9603"/>
        <dbReference type="ChEBI" id="CHEBI:15378"/>
        <dbReference type="ChEBI" id="CHEBI:58405"/>
        <dbReference type="ChEBI" id="CHEBI:60033"/>
        <dbReference type="ChEBI" id="CHEBI:78435"/>
        <dbReference type="EC" id="2.4.99.28"/>
    </reaction>
</comment>
<comment type="catalytic activity">
    <reaction evidence="2">
        <text>Preferential cleavage: (Ac)2-L-Lys-D-Ala-|-D-Ala. Also transpeptidation of peptidyl-alanyl moieties that are N-acyl substituents of D-alanine.</text>
        <dbReference type="EC" id="3.4.16.4"/>
    </reaction>
</comment>
<comment type="pathway">
    <text>Cell wall biogenesis; peptidoglycan biosynthesis.</text>
</comment>
<comment type="subcellular location">
    <subcellularLocation>
        <location evidence="1">Cell inner membrane</location>
        <topology evidence="1">Single-pass type II membrane protein</topology>
    </subcellularLocation>
</comment>
<comment type="similarity">
    <text evidence="6">In the N-terminal section; belongs to the glycosyltransferase 51 family.</text>
</comment>
<comment type="similarity">
    <text evidence="6">In the C-terminal section; belongs to the transpeptidase family.</text>
</comment>
<dbReference type="EC" id="2.4.99.28" evidence="2"/>
<dbReference type="EC" id="3.4.16.4" evidence="2"/>
<dbReference type="EMBL" id="AE004969">
    <property type="protein sequence ID" value="AAW88860.1"/>
    <property type="molecule type" value="Genomic_DNA"/>
</dbReference>
<dbReference type="RefSeq" id="WP_003687357.1">
    <property type="nucleotide sequence ID" value="NC_002946.2"/>
</dbReference>
<dbReference type="RefSeq" id="YP_207272.1">
    <property type="nucleotide sequence ID" value="NC_002946.2"/>
</dbReference>
<dbReference type="SMR" id="Q5FAC7"/>
<dbReference type="STRING" id="242231.NGO_0099"/>
<dbReference type="KEGG" id="ngo:NGO_0099"/>
<dbReference type="PATRIC" id="fig|242231.10.peg.131"/>
<dbReference type="HOGENOM" id="CLU_006354_2_4_4"/>
<dbReference type="UniPathway" id="UPA00219"/>
<dbReference type="Proteomes" id="UP000000535">
    <property type="component" value="Chromosome"/>
</dbReference>
<dbReference type="GO" id="GO:0030288">
    <property type="term" value="C:outer membrane-bounded periplasmic space"/>
    <property type="evidence" value="ECO:0007669"/>
    <property type="project" value="TreeGrafter"/>
</dbReference>
<dbReference type="GO" id="GO:0005886">
    <property type="term" value="C:plasma membrane"/>
    <property type="evidence" value="ECO:0007669"/>
    <property type="project" value="UniProtKB-SubCell"/>
</dbReference>
<dbReference type="GO" id="GO:0008658">
    <property type="term" value="F:penicillin binding"/>
    <property type="evidence" value="ECO:0007669"/>
    <property type="project" value="InterPro"/>
</dbReference>
<dbReference type="GO" id="GO:0008955">
    <property type="term" value="F:peptidoglycan glycosyltransferase activity"/>
    <property type="evidence" value="ECO:0007669"/>
    <property type="project" value="RHEA"/>
</dbReference>
<dbReference type="GO" id="GO:0009002">
    <property type="term" value="F:serine-type D-Ala-D-Ala carboxypeptidase activity"/>
    <property type="evidence" value="ECO:0007669"/>
    <property type="project" value="UniProtKB-EC"/>
</dbReference>
<dbReference type="GO" id="GO:0071555">
    <property type="term" value="P:cell wall organization"/>
    <property type="evidence" value="ECO:0007669"/>
    <property type="project" value="UniProtKB-KW"/>
</dbReference>
<dbReference type="GO" id="GO:0009252">
    <property type="term" value="P:peptidoglycan biosynthetic process"/>
    <property type="evidence" value="ECO:0007669"/>
    <property type="project" value="UniProtKB-UniPathway"/>
</dbReference>
<dbReference type="GO" id="GO:0006508">
    <property type="term" value="P:proteolysis"/>
    <property type="evidence" value="ECO:0007669"/>
    <property type="project" value="UniProtKB-KW"/>
</dbReference>
<dbReference type="GO" id="GO:0008360">
    <property type="term" value="P:regulation of cell shape"/>
    <property type="evidence" value="ECO:0007669"/>
    <property type="project" value="UniProtKB-KW"/>
</dbReference>
<dbReference type="GO" id="GO:0046677">
    <property type="term" value="P:response to antibiotic"/>
    <property type="evidence" value="ECO:0007669"/>
    <property type="project" value="UniProtKB-KW"/>
</dbReference>
<dbReference type="FunFam" id="3.40.710.10:FF:000041">
    <property type="entry name" value="Penicillin-binding protein 1A"/>
    <property type="match status" value="1"/>
</dbReference>
<dbReference type="FunFam" id="1.10.3810.10:FF:000003">
    <property type="entry name" value="Penicillin-binding protein 1a"/>
    <property type="match status" value="1"/>
</dbReference>
<dbReference type="Gene3D" id="1.10.3810.10">
    <property type="entry name" value="Biosynthetic peptidoglycan transglycosylase-like"/>
    <property type="match status" value="1"/>
</dbReference>
<dbReference type="Gene3D" id="3.40.710.10">
    <property type="entry name" value="DD-peptidase/beta-lactamase superfamily"/>
    <property type="match status" value="2"/>
</dbReference>
<dbReference type="InterPro" id="IPR012338">
    <property type="entry name" value="Beta-lactam/transpept-like"/>
</dbReference>
<dbReference type="InterPro" id="IPR001264">
    <property type="entry name" value="Glyco_trans_51"/>
</dbReference>
<dbReference type="InterPro" id="IPR050396">
    <property type="entry name" value="Glycosyltr_51/Transpeptidase"/>
</dbReference>
<dbReference type="InterPro" id="IPR023346">
    <property type="entry name" value="Lysozyme-like_dom_sf"/>
</dbReference>
<dbReference type="InterPro" id="IPR036950">
    <property type="entry name" value="PBP_transglycosylase"/>
</dbReference>
<dbReference type="InterPro" id="IPR031376">
    <property type="entry name" value="PCB_OB"/>
</dbReference>
<dbReference type="InterPro" id="IPR001460">
    <property type="entry name" value="PCN-bd_Tpept"/>
</dbReference>
<dbReference type="NCBIfam" id="TIGR02074">
    <property type="entry name" value="PBP_1a_fam"/>
    <property type="match status" value="1"/>
</dbReference>
<dbReference type="PANTHER" id="PTHR32282">
    <property type="entry name" value="BINDING PROTEIN TRANSPEPTIDASE, PUTATIVE-RELATED"/>
    <property type="match status" value="1"/>
</dbReference>
<dbReference type="PANTHER" id="PTHR32282:SF27">
    <property type="entry name" value="PENICILLIN-BINDING PROTEIN 1A"/>
    <property type="match status" value="1"/>
</dbReference>
<dbReference type="Pfam" id="PF17092">
    <property type="entry name" value="PCB_OB"/>
    <property type="match status" value="1"/>
</dbReference>
<dbReference type="Pfam" id="PF00912">
    <property type="entry name" value="Transgly"/>
    <property type="match status" value="1"/>
</dbReference>
<dbReference type="Pfam" id="PF00905">
    <property type="entry name" value="Transpeptidase"/>
    <property type="match status" value="1"/>
</dbReference>
<dbReference type="SUPFAM" id="SSF56601">
    <property type="entry name" value="beta-lactamase/transpeptidase-like"/>
    <property type="match status" value="1"/>
</dbReference>
<dbReference type="SUPFAM" id="SSF53955">
    <property type="entry name" value="Lysozyme-like"/>
    <property type="match status" value="1"/>
</dbReference>
<evidence type="ECO:0000250" key="1"/>
<evidence type="ECO:0000250" key="2">
    <source>
        <dbReference type="UniProtKB" id="P02918"/>
    </source>
</evidence>
<evidence type="ECO:0000250" key="3">
    <source>
        <dbReference type="UniProtKB" id="P02919"/>
    </source>
</evidence>
<evidence type="ECO:0000255" key="4"/>
<evidence type="ECO:0000256" key="5">
    <source>
        <dbReference type="SAM" id="MobiDB-lite"/>
    </source>
</evidence>
<evidence type="ECO:0000305" key="6"/>
<proteinExistence type="inferred from homology"/>
<reference key="1">
    <citation type="journal article" date="1997" name="J. Bacteriol.">
        <title>Cloning and characterization of the ponA gene encoding penicillin-binding protein 1 from Neisseria gonorrhoeae and Neisseria meningitidis.</title>
        <authorList>
            <person name="Ropp P.A."/>
            <person name="Nicholas R.A."/>
        </authorList>
    </citation>
    <scope>NUCLEOTIDE SEQUENCE [GENOMIC DNA]</scope>
</reference>
<reference key="2">
    <citation type="submission" date="2003-03" db="EMBL/GenBank/DDBJ databases">
        <title>The complete genome sequence of Neisseria gonorrhoeae.</title>
        <authorList>
            <person name="Lewis L.A."/>
            <person name="Gillaspy A.F."/>
            <person name="McLaughlin R.E."/>
            <person name="Gipson M."/>
            <person name="Ducey T.F."/>
            <person name="Ownbey T."/>
            <person name="Hartman K."/>
            <person name="Nydick C."/>
            <person name="Carson M.B."/>
            <person name="Vaughn J."/>
            <person name="Thomson C."/>
            <person name="Song L."/>
            <person name="Lin S."/>
            <person name="Yuan X."/>
            <person name="Najar F."/>
            <person name="Zhan M."/>
            <person name="Ren Q."/>
            <person name="Zhu H."/>
            <person name="Qi S."/>
            <person name="Kenton S.M."/>
            <person name="Lai H."/>
            <person name="White J.D."/>
            <person name="Clifton S."/>
            <person name="Roe B.A."/>
            <person name="Dyer D.W."/>
        </authorList>
    </citation>
    <scope>NUCLEOTIDE SEQUENCE [LARGE SCALE GENOMIC DNA]</scope>
    <source>
        <strain>ATCC 700825 / FA 1090</strain>
    </source>
</reference>
<gene>
    <name type="primary">mrcA</name>
    <name type="ordered locus">NGO_0099</name>
</gene>
<protein>
    <recommendedName>
        <fullName>Penicillin-binding protein 1A</fullName>
        <shortName>PBP-1a</shortName>
        <shortName>PBP1a</shortName>
    </recommendedName>
    <domain>
        <recommendedName>
            <fullName>Penicillin-insensitive transglycosylase</fullName>
            <ecNumber evidence="2">2.4.99.28</ecNumber>
        </recommendedName>
        <alternativeName>
            <fullName>Peptidoglycan TGase</fullName>
        </alternativeName>
    </domain>
    <domain>
        <recommendedName>
            <fullName>Penicillin-sensitive transpeptidase</fullName>
            <ecNumber evidence="2">3.4.16.4</ecNumber>
        </recommendedName>
        <alternativeName>
            <fullName>DD-transpeptidase</fullName>
        </alternativeName>
    </domain>
</protein>
<organism>
    <name type="scientific">Neisseria gonorrhoeae (strain ATCC 700825 / FA 1090)</name>
    <dbReference type="NCBI Taxonomy" id="242231"/>
    <lineage>
        <taxon>Bacteria</taxon>
        <taxon>Pseudomonadati</taxon>
        <taxon>Pseudomonadota</taxon>
        <taxon>Betaproteobacteria</taxon>
        <taxon>Neisseriales</taxon>
        <taxon>Neisseriaceae</taxon>
        <taxon>Neisseria</taxon>
    </lineage>
</organism>
<name>PBPA_NEIG1</name>
<sequence>MIKKILTTCFGLFFGFCVFGVGLVAIAILVTYPKLPSLDSLQHYQPKMPLTIYSADGEVIGMYGEQRREFTKIGDFPEVLRNAVIAAEDKRFYRHWGVDVWGVARAAVGNVVSGSVQSGASTITQQVAKNFYLSSEKTFTRKFNEVLLAYKIEQSLSKDKILELYFNQIYLGQRAYGFASAAQIYFNKNVRDLTLAEAAMLAGLPKAPSAYNPIVNPERAKLRQKYILNNMLEEKMITVQQRDQALNEELHYERFVRKIDQSALYVAEMVRRELYEKYGEDAYTQGFKVYTTVRTDHQKAATEALRKALRNFDRGSSYRGAENYIDLSKSEDVEETVSQYLSGLYTVDKMVPAVVLDVTKKKNVVIQLPGGRRVALDRRALGFAARAVDNEKMGEDRIRRGAVIRVKNNGGRWAVVQEPLLQGALVSLDAKTGAVRALVGGYDFHSKTFNRAVQAMRQPGSTFKPFVYSAALSKGMTASTVVNDAPISLPGKGPNGSVWTPKNSDGRYSGYITLRQALTASKNMVSIRILMSIGVGYAQQYIRRFGFRPSELPASLSMALGTGETTPLKVAEAYSVFANGGYRVSSHVIDKIYDRDGRLRAQMQPLVAGQNAPQAIDPRNAYIMYKIMQDVVRVGTARGAAALGRTDIAGKTGTTNDNKDAWFVGFNPDVVTAVYIGFDKPKSMGRAGYGGTIAVPVWVDYMRFALKGKQGKGMKMPEGVVSSNGEYYMKERMVTDPGLMLDNSGIAPQPSRRAKEDDEAAVENEQQGRSDETRQDVQETPVLPSNTDSKQQQLDSLF</sequence>
<accession>Q5FAC7</accession>